<protein>
    <recommendedName>
        <fullName evidence="1">6,7-dimethyl-8-ribityllumazine synthase</fullName>
        <shortName evidence="1">DMRL synthase</shortName>
        <shortName evidence="1">LS</shortName>
        <shortName evidence="1">Lumazine synthase</shortName>
        <ecNumber evidence="1">2.5.1.78</ecNumber>
    </recommendedName>
</protein>
<proteinExistence type="inferred from homology"/>
<keyword id="KW-1185">Reference proteome</keyword>
<keyword id="KW-0686">Riboflavin biosynthesis</keyword>
<keyword id="KW-0808">Transferase</keyword>
<dbReference type="EC" id="2.5.1.78" evidence="1"/>
<dbReference type="EMBL" id="CP000910">
    <property type="protein sequence ID" value="ABY24074.1"/>
    <property type="molecule type" value="Genomic_DNA"/>
</dbReference>
<dbReference type="RefSeq" id="WP_012245737.1">
    <property type="nucleotide sequence ID" value="NC_010168.1"/>
</dbReference>
<dbReference type="SMR" id="A9WR65"/>
<dbReference type="STRING" id="288705.RSal33209_2344"/>
<dbReference type="KEGG" id="rsa:RSal33209_2344"/>
<dbReference type="eggNOG" id="COG0054">
    <property type="taxonomic scope" value="Bacteria"/>
</dbReference>
<dbReference type="HOGENOM" id="CLU_089358_1_1_11"/>
<dbReference type="UniPathway" id="UPA00275">
    <property type="reaction ID" value="UER00404"/>
</dbReference>
<dbReference type="Proteomes" id="UP000002007">
    <property type="component" value="Chromosome"/>
</dbReference>
<dbReference type="GO" id="GO:0005829">
    <property type="term" value="C:cytosol"/>
    <property type="evidence" value="ECO:0007669"/>
    <property type="project" value="TreeGrafter"/>
</dbReference>
<dbReference type="GO" id="GO:0009349">
    <property type="term" value="C:riboflavin synthase complex"/>
    <property type="evidence" value="ECO:0007669"/>
    <property type="project" value="InterPro"/>
</dbReference>
<dbReference type="GO" id="GO:0000906">
    <property type="term" value="F:6,7-dimethyl-8-ribityllumazine synthase activity"/>
    <property type="evidence" value="ECO:0007669"/>
    <property type="project" value="UniProtKB-UniRule"/>
</dbReference>
<dbReference type="GO" id="GO:0009231">
    <property type="term" value="P:riboflavin biosynthetic process"/>
    <property type="evidence" value="ECO:0007669"/>
    <property type="project" value="UniProtKB-UniRule"/>
</dbReference>
<dbReference type="CDD" id="cd09209">
    <property type="entry name" value="Lumazine_synthase-I"/>
    <property type="match status" value="1"/>
</dbReference>
<dbReference type="Gene3D" id="3.40.50.960">
    <property type="entry name" value="Lumazine/riboflavin synthase"/>
    <property type="match status" value="1"/>
</dbReference>
<dbReference type="HAMAP" id="MF_00178">
    <property type="entry name" value="Lumazine_synth"/>
    <property type="match status" value="1"/>
</dbReference>
<dbReference type="InterPro" id="IPR034964">
    <property type="entry name" value="LS"/>
</dbReference>
<dbReference type="InterPro" id="IPR002180">
    <property type="entry name" value="LS/RS"/>
</dbReference>
<dbReference type="InterPro" id="IPR036467">
    <property type="entry name" value="LS/RS_sf"/>
</dbReference>
<dbReference type="NCBIfam" id="TIGR00114">
    <property type="entry name" value="lumazine-synth"/>
    <property type="match status" value="1"/>
</dbReference>
<dbReference type="PANTHER" id="PTHR21058:SF0">
    <property type="entry name" value="6,7-DIMETHYL-8-RIBITYLLUMAZINE SYNTHASE"/>
    <property type="match status" value="1"/>
</dbReference>
<dbReference type="PANTHER" id="PTHR21058">
    <property type="entry name" value="6,7-DIMETHYL-8-RIBITYLLUMAZINE SYNTHASE DMRL SYNTHASE LUMAZINE SYNTHASE"/>
    <property type="match status" value="1"/>
</dbReference>
<dbReference type="Pfam" id="PF00885">
    <property type="entry name" value="DMRL_synthase"/>
    <property type="match status" value="1"/>
</dbReference>
<dbReference type="SUPFAM" id="SSF52121">
    <property type="entry name" value="Lumazine synthase"/>
    <property type="match status" value="1"/>
</dbReference>
<comment type="function">
    <text evidence="1">Catalyzes the formation of 6,7-dimethyl-8-ribityllumazine by condensation of 5-amino-6-(D-ribitylamino)uracil with 3,4-dihydroxy-2-butanone 4-phosphate. This is the penultimate step in the biosynthesis of riboflavin.</text>
</comment>
<comment type="catalytic activity">
    <reaction evidence="1">
        <text>(2S)-2-hydroxy-3-oxobutyl phosphate + 5-amino-6-(D-ribitylamino)uracil = 6,7-dimethyl-8-(1-D-ribityl)lumazine + phosphate + 2 H2O + H(+)</text>
        <dbReference type="Rhea" id="RHEA:26152"/>
        <dbReference type="ChEBI" id="CHEBI:15377"/>
        <dbReference type="ChEBI" id="CHEBI:15378"/>
        <dbReference type="ChEBI" id="CHEBI:15934"/>
        <dbReference type="ChEBI" id="CHEBI:43474"/>
        <dbReference type="ChEBI" id="CHEBI:58201"/>
        <dbReference type="ChEBI" id="CHEBI:58830"/>
        <dbReference type="EC" id="2.5.1.78"/>
    </reaction>
</comment>
<comment type="pathway">
    <text evidence="1">Cofactor biosynthesis; riboflavin biosynthesis; riboflavin from 2-hydroxy-3-oxobutyl phosphate and 5-amino-6-(D-ribitylamino)uracil: step 1/2.</text>
</comment>
<comment type="similarity">
    <text evidence="1">Belongs to the DMRL synthase family.</text>
</comment>
<sequence length="159" mass="16339">MSGAGAPVSPQLNAKGLELVIIAASWHEKVMNGLLDGALRAARDAGIEEPRIVRVPGSFELPVAAARLAPDYDAVVALGVVIRGGTPHFEYVCQAATSGLTEVSVRTGVPVGFGLLTCDNDQQALDRAGLPAAPGFAGSKEDKGYEATSAALETALTLR</sequence>
<name>RISB_RENSM</name>
<evidence type="ECO:0000255" key="1">
    <source>
        <dbReference type="HAMAP-Rule" id="MF_00178"/>
    </source>
</evidence>
<reference key="1">
    <citation type="journal article" date="2008" name="J. Bacteriol.">
        <title>Genome sequence of the fish pathogen Renibacterium salmoninarum suggests reductive evolution away from an environmental Arthrobacter ancestor.</title>
        <authorList>
            <person name="Wiens G.D."/>
            <person name="Rockey D.D."/>
            <person name="Wu Z."/>
            <person name="Chang J."/>
            <person name="Levy R."/>
            <person name="Crane S."/>
            <person name="Chen D.S."/>
            <person name="Capri G.R."/>
            <person name="Burnett J.R."/>
            <person name="Sudheesh P.S."/>
            <person name="Schipma M.J."/>
            <person name="Burd H."/>
            <person name="Bhattacharyya A."/>
            <person name="Rhodes L.D."/>
            <person name="Kaul R."/>
            <person name="Strom M.S."/>
        </authorList>
    </citation>
    <scope>NUCLEOTIDE SEQUENCE [LARGE SCALE GENOMIC DNA]</scope>
    <source>
        <strain>ATCC 33209 / DSM 20767 / JCM 11484 / NBRC 15589 / NCIMB 2235</strain>
    </source>
</reference>
<feature type="chain" id="PRO_1000077245" description="6,7-dimethyl-8-ribityllumazine synthase">
    <location>
        <begin position="1"/>
        <end position="159"/>
    </location>
</feature>
<feature type="active site" description="Proton donor" evidence="1">
    <location>
        <position position="88"/>
    </location>
</feature>
<feature type="binding site" evidence="1">
    <location>
        <position position="26"/>
    </location>
    <ligand>
        <name>5-amino-6-(D-ribitylamino)uracil</name>
        <dbReference type="ChEBI" id="CHEBI:15934"/>
    </ligand>
</feature>
<feature type="binding site" evidence="1">
    <location>
        <begin position="58"/>
        <end position="60"/>
    </location>
    <ligand>
        <name>5-amino-6-(D-ribitylamino)uracil</name>
        <dbReference type="ChEBI" id="CHEBI:15934"/>
    </ligand>
</feature>
<feature type="binding site" evidence="1">
    <location>
        <begin position="80"/>
        <end position="82"/>
    </location>
    <ligand>
        <name>5-amino-6-(D-ribitylamino)uracil</name>
        <dbReference type="ChEBI" id="CHEBI:15934"/>
    </ligand>
</feature>
<feature type="binding site" evidence="1">
    <location>
        <begin position="85"/>
        <end position="86"/>
    </location>
    <ligand>
        <name>(2S)-2-hydroxy-3-oxobutyl phosphate</name>
        <dbReference type="ChEBI" id="CHEBI:58830"/>
    </ligand>
</feature>
<feature type="binding site" evidence="1">
    <location>
        <position position="113"/>
    </location>
    <ligand>
        <name>5-amino-6-(D-ribitylamino)uracil</name>
        <dbReference type="ChEBI" id="CHEBI:15934"/>
    </ligand>
</feature>
<feature type="binding site" evidence="1">
    <location>
        <position position="127"/>
    </location>
    <ligand>
        <name>(2S)-2-hydroxy-3-oxobutyl phosphate</name>
        <dbReference type="ChEBI" id="CHEBI:58830"/>
    </ligand>
</feature>
<gene>
    <name evidence="1" type="primary">ribH</name>
    <name type="ordered locus">RSal33209_2344</name>
</gene>
<organism>
    <name type="scientific">Renibacterium salmoninarum (strain ATCC 33209 / DSM 20767 / JCM 11484 / NBRC 15589 / NCIMB 2235)</name>
    <dbReference type="NCBI Taxonomy" id="288705"/>
    <lineage>
        <taxon>Bacteria</taxon>
        <taxon>Bacillati</taxon>
        <taxon>Actinomycetota</taxon>
        <taxon>Actinomycetes</taxon>
        <taxon>Micrococcales</taxon>
        <taxon>Micrococcaceae</taxon>
        <taxon>Renibacterium</taxon>
    </lineage>
</organism>
<accession>A9WR65</accession>